<accession>Q8EK29</accession>
<organism>
    <name type="scientific">Shewanella oneidensis (strain ATCC 700550 / JCM 31522 / CIP 106686 / LMG 19005 / NCIMB 14063 / MR-1)</name>
    <dbReference type="NCBI Taxonomy" id="211586"/>
    <lineage>
        <taxon>Bacteria</taxon>
        <taxon>Pseudomonadati</taxon>
        <taxon>Pseudomonadota</taxon>
        <taxon>Gammaproteobacteria</taxon>
        <taxon>Alteromonadales</taxon>
        <taxon>Shewanellaceae</taxon>
        <taxon>Shewanella</taxon>
    </lineage>
</organism>
<dbReference type="EC" id="2.1.3.3" evidence="2"/>
<dbReference type="EMBL" id="AE014299">
    <property type="protein sequence ID" value="AAN53362.1"/>
    <property type="molecule type" value="Genomic_DNA"/>
</dbReference>
<dbReference type="RefSeq" id="NP_715917.1">
    <property type="nucleotide sequence ID" value="NC_004347.2"/>
</dbReference>
<dbReference type="RefSeq" id="WP_011070649.1">
    <property type="nucleotide sequence ID" value="NC_004347.2"/>
</dbReference>
<dbReference type="SMR" id="Q8EK29"/>
<dbReference type="STRING" id="211586.SO_0277"/>
<dbReference type="PaxDb" id="211586-SO_0277"/>
<dbReference type="KEGG" id="son:SO_0277"/>
<dbReference type="PATRIC" id="fig|211586.12.peg.268"/>
<dbReference type="eggNOG" id="COG0078">
    <property type="taxonomic scope" value="Bacteria"/>
</dbReference>
<dbReference type="HOGENOM" id="CLU_043846_3_2_6"/>
<dbReference type="OrthoDB" id="9802587at2"/>
<dbReference type="PhylomeDB" id="Q8EK29"/>
<dbReference type="BioCyc" id="SONE211586:G1GMP-267-MONOMER"/>
<dbReference type="UniPathway" id="UPA00068">
    <property type="reaction ID" value="UER00112"/>
</dbReference>
<dbReference type="Proteomes" id="UP000008186">
    <property type="component" value="Chromosome"/>
</dbReference>
<dbReference type="GO" id="GO:0005737">
    <property type="term" value="C:cytoplasm"/>
    <property type="evidence" value="ECO:0007669"/>
    <property type="project" value="UniProtKB-SubCell"/>
</dbReference>
<dbReference type="GO" id="GO:0016597">
    <property type="term" value="F:amino acid binding"/>
    <property type="evidence" value="ECO:0007669"/>
    <property type="project" value="InterPro"/>
</dbReference>
<dbReference type="GO" id="GO:0004585">
    <property type="term" value="F:ornithine carbamoyltransferase activity"/>
    <property type="evidence" value="ECO:0000318"/>
    <property type="project" value="GO_Central"/>
</dbReference>
<dbReference type="GO" id="GO:0042450">
    <property type="term" value="P:arginine biosynthetic process via ornithine"/>
    <property type="evidence" value="ECO:0000318"/>
    <property type="project" value="GO_Central"/>
</dbReference>
<dbReference type="GO" id="GO:0019240">
    <property type="term" value="P:citrulline biosynthetic process"/>
    <property type="evidence" value="ECO:0000318"/>
    <property type="project" value="GO_Central"/>
</dbReference>
<dbReference type="GO" id="GO:0006526">
    <property type="term" value="P:L-arginine biosynthetic process"/>
    <property type="evidence" value="ECO:0007669"/>
    <property type="project" value="UniProtKB-UniRule"/>
</dbReference>
<dbReference type="FunFam" id="3.40.50.1370:FF:000008">
    <property type="entry name" value="Ornithine carbamoyltransferase"/>
    <property type="match status" value="1"/>
</dbReference>
<dbReference type="Gene3D" id="3.40.50.1370">
    <property type="entry name" value="Aspartate/ornithine carbamoyltransferase"/>
    <property type="match status" value="2"/>
</dbReference>
<dbReference type="HAMAP" id="MF_01109">
    <property type="entry name" value="OTCase"/>
    <property type="match status" value="1"/>
</dbReference>
<dbReference type="InterPro" id="IPR006132">
    <property type="entry name" value="Asp/Orn_carbamoyltranf_P-bd"/>
</dbReference>
<dbReference type="InterPro" id="IPR006130">
    <property type="entry name" value="Asp/Orn_carbamoylTrfase"/>
</dbReference>
<dbReference type="InterPro" id="IPR036901">
    <property type="entry name" value="Asp/Orn_carbamoylTrfase_sf"/>
</dbReference>
<dbReference type="InterPro" id="IPR006131">
    <property type="entry name" value="Asp_carbamoyltransf_Asp/Orn-bd"/>
</dbReference>
<dbReference type="InterPro" id="IPR002292">
    <property type="entry name" value="Orn/put_carbamltrans"/>
</dbReference>
<dbReference type="InterPro" id="IPR024904">
    <property type="entry name" value="OTCase_ArgI"/>
</dbReference>
<dbReference type="NCBIfam" id="TIGR00658">
    <property type="entry name" value="orni_carb_tr"/>
    <property type="match status" value="1"/>
</dbReference>
<dbReference type="NCBIfam" id="NF001986">
    <property type="entry name" value="PRK00779.1"/>
    <property type="match status" value="1"/>
</dbReference>
<dbReference type="NCBIfam" id="NF011380">
    <property type="entry name" value="PRK14805.1"/>
    <property type="match status" value="1"/>
</dbReference>
<dbReference type="PANTHER" id="PTHR45753">
    <property type="entry name" value="ORNITHINE CARBAMOYLTRANSFERASE, MITOCHONDRIAL"/>
    <property type="match status" value="1"/>
</dbReference>
<dbReference type="PANTHER" id="PTHR45753:SF3">
    <property type="entry name" value="ORNITHINE TRANSCARBAMYLASE, MITOCHONDRIAL"/>
    <property type="match status" value="1"/>
</dbReference>
<dbReference type="Pfam" id="PF00185">
    <property type="entry name" value="OTCace"/>
    <property type="match status" value="1"/>
</dbReference>
<dbReference type="Pfam" id="PF02729">
    <property type="entry name" value="OTCace_N"/>
    <property type="match status" value="1"/>
</dbReference>
<dbReference type="PRINTS" id="PR00100">
    <property type="entry name" value="AOTCASE"/>
</dbReference>
<dbReference type="PRINTS" id="PR00102">
    <property type="entry name" value="OTCASE"/>
</dbReference>
<dbReference type="SUPFAM" id="SSF53671">
    <property type="entry name" value="Aspartate/ornithine carbamoyltransferase"/>
    <property type="match status" value="1"/>
</dbReference>
<keyword id="KW-0028">Amino-acid biosynthesis</keyword>
<keyword id="KW-0055">Arginine biosynthesis</keyword>
<keyword id="KW-0963">Cytoplasm</keyword>
<keyword id="KW-1185">Reference proteome</keyword>
<keyword id="KW-0808">Transferase</keyword>
<protein>
    <recommendedName>
        <fullName evidence="2">Ornithine carbamoyltransferase</fullName>
        <shortName evidence="2">OTCase</shortName>
        <ecNumber evidence="2">2.1.3.3</ecNumber>
    </recommendedName>
</protein>
<gene>
    <name evidence="2" type="primary">argF</name>
    <name type="ordered locus">SO_0277</name>
</gene>
<evidence type="ECO:0000250" key="1"/>
<evidence type="ECO:0000255" key="2">
    <source>
        <dbReference type="HAMAP-Rule" id="MF_01109"/>
    </source>
</evidence>
<evidence type="ECO:0000305" key="3"/>
<proteinExistence type="inferred from homology"/>
<name>OTC_SHEON</name>
<reference key="1">
    <citation type="journal article" date="2002" name="Nat. Biotechnol.">
        <title>Genome sequence of the dissimilatory metal ion-reducing bacterium Shewanella oneidensis.</title>
        <authorList>
            <person name="Heidelberg J.F."/>
            <person name="Paulsen I.T."/>
            <person name="Nelson K.E."/>
            <person name="Gaidos E.J."/>
            <person name="Nelson W.C."/>
            <person name="Read T.D."/>
            <person name="Eisen J.A."/>
            <person name="Seshadri R."/>
            <person name="Ward N.L."/>
            <person name="Methe B.A."/>
            <person name="Clayton R.A."/>
            <person name="Meyer T."/>
            <person name="Tsapin A."/>
            <person name="Scott J."/>
            <person name="Beanan M.J."/>
            <person name="Brinkac L.M."/>
            <person name="Daugherty S.C."/>
            <person name="DeBoy R.T."/>
            <person name="Dodson R.J."/>
            <person name="Durkin A.S."/>
            <person name="Haft D.H."/>
            <person name="Kolonay J.F."/>
            <person name="Madupu R."/>
            <person name="Peterson J.D."/>
            <person name="Umayam L.A."/>
            <person name="White O."/>
            <person name="Wolf A.M."/>
            <person name="Vamathevan J.J."/>
            <person name="Weidman J.F."/>
            <person name="Impraim M."/>
            <person name="Lee K."/>
            <person name="Berry K.J."/>
            <person name="Lee C."/>
            <person name="Mueller J."/>
            <person name="Khouri H.M."/>
            <person name="Gill J."/>
            <person name="Utterback T.R."/>
            <person name="McDonald L.A."/>
            <person name="Feldblyum T.V."/>
            <person name="Smith H.O."/>
            <person name="Venter J.C."/>
            <person name="Nealson K.H."/>
            <person name="Fraser C.M."/>
        </authorList>
    </citation>
    <scope>NUCLEOTIDE SEQUENCE [LARGE SCALE GENOMIC DNA]</scope>
    <source>
        <strain>ATCC 700550 / JCM 31522 / CIP 106686 / LMG 19005 / NCIMB 14063 / MR-1</strain>
    </source>
</reference>
<feature type="chain" id="PRO_0000113006" description="Ornithine carbamoyltransferase">
    <location>
        <begin position="1"/>
        <end position="301"/>
    </location>
</feature>
<feature type="binding site" evidence="2">
    <location>
        <position position="100"/>
    </location>
    <ligand>
        <name>carbamoyl phosphate</name>
        <dbReference type="ChEBI" id="CHEBI:58228"/>
    </ligand>
</feature>
<feature type="binding site" evidence="2">
    <location>
        <begin position="127"/>
        <end position="130"/>
    </location>
    <ligand>
        <name>carbamoyl phosphate</name>
        <dbReference type="ChEBI" id="CHEBI:58228"/>
    </ligand>
</feature>
<feature type="binding site" evidence="2">
    <location>
        <position position="158"/>
    </location>
    <ligand>
        <name>L-ornithine</name>
        <dbReference type="ChEBI" id="CHEBI:46911"/>
    </ligand>
</feature>
<feature type="binding site" evidence="2">
    <location>
        <position position="221"/>
    </location>
    <ligand>
        <name>L-ornithine</name>
        <dbReference type="ChEBI" id="CHEBI:46911"/>
    </ligand>
</feature>
<feature type="binding site" evidence="2">
    <location>
        <begin position="225"/>
        <end position="226"/>
    </location>
    <ligand>
        <name>L-ornithine</name>
        <dbReference type="ChEBI" id="CHEBI:46911"/>
    </ligand>
</feature>
<feature type="binding site" evidence="2">
    <location>
        <begin position="260"/>
        <end position="261"/>
    </location>
    <ligand>
        <name>carbamoyl phosphate</name>
        <dbReference type="ChEBI" id="CHEBI:58228"/>
    </ligand>
</feature>
<feature type="binding site" evidence="2">
    <location>
        <position position="288"/>
    </location>
    <ligand>
        <name>carbamoyl phosphate</name>
        <dbReference type="ChEBI" id="CHEBI:58228"/>
    </ligand>
</feature>
<comment type="function">
    <text evidence="1">Reversibly catalyzes the transfer of the carbamoyl group from carbamoyl phosphate (CP) to the N(epsilon) atom of ornithine (ORN) to produce L-citrulline.</text>
</comment>
<comment type="catalytic activity">
    <reaction evidence="2">
        <text>carbamoyl phosphate + L-ornithine = L-citrulline + phosphate + H(+)</text>
        <dbReference type="Rhea" id="RHEA:19513"/>
        <dbReference type="ChEBI" id="CHEBI:15378"/>
        <dbReference type="ChEBI" id="CHEBI:43474"/>
        <dbReference type="ChEBI" id="CHEBI:46911"/>
        <dbReference type="ChEBI" id="CHEBI:57743"/>
        <dbReference type="ChEBI" id="CHEBI:58228"/>
        <dbReference type="EC" id="2.1.3.3"/>
    </reaction>
</comment>
<comment type="pathway">
    <text evidence="2">Amino-acid biosynthesis; L-arginine biosynthesis; L-arginine from L-ornithine and carbamoyl phosphate: step 1/3.</text>
</comment>
<comment type="subcellular location">
    <subcellularLocation>
        <location evidence="2">Cytoplasm</location>
    </subcellularLocation>
</comment>
<comment type="similarity">
    <text evidence="2">Belongs to the aspartate/ornithine carbamoyltransferase superfamily. OTCase family.</text>
</comment>
<comment type="caution">
    <text evidence="3">Lacks the conserved threonine residue in position 50, which is part of the carbamoylphosphate binding site; it is replaced by a leucine residue.</text>
</comment>
<sequence length="301" mass="32927">MKHFLSIKELTQQQLLDLITLAKTIKANPAEYRHALDGKSVVMLFEKPSLRTRVSFDIGINKFGGHCLYLDQQNGALGKRESVADFASNLSCWADAIVARTYSHTTIEQLAEFGTVPVINALSDLYHPCQALADFLTLAEHFENISDVKLAYVGDGNNVTNSLMYCAAILGATMTVICPAGHFPDGYVVAEVQELASRYGGKIVLTSDIDAIEGHDAIYTDTWISMGDPTPLAEIKDKFAPYQVNNALMAKAGAHFFMHCLPAHRGVEVTDAVMDGECSLILQQAENRMHAQNAVLVTLFS</sequence>